<dbReference type="GO" id="GO:0005576">
    <property type="term" value="C:extracellular region"/>
    <property type="evidence" value="ECO:0007669"/>
    <property type="project" value="UniProtKB-SubCell"/>
</dbReference>
<dbReference type="GO" id="GO:0007218">
    <property type="term" value="P:neuropeptide signaling pathway"/>
    <property type="evidence" value="ECO:0007669"/>
    <property type="project" value="UniProtKB-KW"/>
</dbReference>
<dbReference type="InterPro" id="IPR013231">
    <property type="entry name" value="Periviscerokinin"/>
</dbReference>
<dbReference type="Pfam" id="PF08259">
    <property type="entry name" value="Periviscerokin"/>
    <property type="match status" value="1"/>
</dbReference>
<sequence length="11" mass="1073">GSSGLIPMGRV</sequence>
<reference evidence="4" key="1">
    <citation type="journal article" date="2009" name="BMC Evol. Biol.">
        <title>A proteomic approach for studying insect phylogeny: CAPA peptides of ancient insect taxa (Dictyoptera, Blattoptera) as a test case.</title>
        <authorList>
            <person name="Roth S."/>
            <person name="Fromm B."/>
            <person name="Gaede G."/>
            <person name="Predel R."/>
        </authorList>
    </citation>
    <scope>PROTEIN SEQUENCE</scope>
    <scope>AMIDATION AT VAL-11</scope>
    <source>
        <tissue evidence="2">Abdominal perisympathetic organs</tissue>
    </source>
</reference>
<evidence type="ECO:0000255" key="1"/>
<evidence type="ECO:0000269" key="2">
    <source>
    </source>
</evidence>
<evidence type="ECO:0000303" key="3">
    <source>
    </source>
</evidence>
<evidence type="ECO:0000305" key="4"/>
<accession>P85551</accession>
<comment type="function">
    <text evidence="4">Mediates visceral muscle contractile activity (myotropic activity).</text>
</comment>
<comment type="subcellular location">
    <subcellularLocation>
        <location evidence="4">Secreted</location>
    </subcellularLocation>
</comment>
<comment type="similarity">
    <text evidence="1">Belongs to the periviscerokinin family.</text>
</comment>
<proteinExistence type="evidence at protein level"/>
<keyword id="KW-0027">Amidation</keyword>
<keyword id="KW-0903">Direct protein sequencing</keyword>
<keyword id="KW-0527">Neuropeptide</keyword>
<keyword id="KW-0964">Secreted</keyword>
<protein>
    <recommendedName>
        <fullName evidence="3">Periviscerokinin-1</fullName>
        <shortName evidence="3">BlaGe-PVK-1</shortName>
    </recommendedName>
</protein>
<feature type="peptide" id="PRO_0000378730" description="Periviscerokinin-1" evidence="2">
    <location>
        <begin position="1"/>
        <end position="11"/>
    </location>
</feature>
<feature type="modified residue" description="Valine amide" evidence="2">
    <location>
        <position position="11"/>
    </location>
</feature>
<organism>
    <name type="scientific">Blattella germanica</name>
    <name type="common">German cockroach</name>
    <name type="synonym">Blatta germanica</name>
    <dbReference type="NCBI Taxonomy" id="6973"/>
    <lineage>
        <taxon>Eukaryota</taxon>
        <taxon>Metazoa</taxon>
        <taxon>Ecdysozoa</taxon>
        <taxon>Arthropoda</taxon>
        <taxon>Hexapoda</taxon>
        <taxon>Insecta</taxon>
        <taxon>Pterygota</taxon>
        <taxon>Neoptera</taxon>
        <taxon>Polyneoptera</taxon>
        <taxon>Dictyoptera</taxon>
        <taxon>Blattodea</taxon>
        <taxon>Blaberoidea</taxon>
        <taxon>Blattellidae</taxon>
        <taxon>Blattella</taxon>
    </lineage>
</organism>
<name>PVK1_BLAGE</name>